<name>KDPC_BRASB</name>
<accession>A5EQ10</accession>
<comment type="function">
    <text evidence="1">Part of the high-affinity ATP-driven potassium transport (or Kdp) system, which catalyzes the hydrolysis of ATP coupled with the electrogenic transport of potassium into the cytoplasm. This subunit acts as a catalytic chaperone that increases the ATP-binding affinity of the ATP-hydrolyzing subunit KdpB by the formation of a transient KdpB/KdpC/ATP ternary complex.</text>
</comment>
<comment type="subunit">
    <text evidence="1">The system is composed of three essential subunits: KdpA, KdpB and KdpC.</text>
</comment>
<comment type="subcellular location">
    <subcellularLocation>
        <location evidence="1">Cell inner membrane</location>
        <topology evidence="1">Single-pass membrane protein</topology>
    </subcellularLocation>
</comment>
<comment type="similarity">
    <text evidence="1">Belongs to the KdpC family.</text>
</comment>
<protein>
    <recommendedName>
        <fullName evidence="1">Potassium-transporting ATPase KdpC subunit</fullName>
    </recommendedName>
    <alternativeName>
        <fullName evidence="1">ATP phosphohydrolase [potassium-transporting] C chain</fullName>
    </alternativeName>
    <alternativeName>
        <fullName evidence="1">Potassium-binding and translocating subunit C</fullName>
    </alternativeName>
    <alternativeName>
        <fullName evidence="1">Potassium-translocating ATPase C chain</fullName>
    </alternativeName>
</protein>
<sequence length="201" mass="21016">MLKEVRPAILVMLALTLITGLLYPLAMTVVAGTIFPAQAEGSLITRSGQVIGSALIGQEFKDDKYFHGRLSATTAADPNDSTKTVPAPYNAANSSGSNLGPTSKALADRLKEEVDKLKAENPGQPVPVDLVTTSASGLDPDISPEAALFQVPRVAKARGVPEASIRTLVAQQVKGRLLGLLGEPRVNVLALNLALDAAKLQ</sequence>
<keyword id="KW-0067">ATP-binding</keyword>
<keyword id="KW-0997">Cell inner membrane</keyword>
<keyword id="KW-1003">Cell membrane</keyword>
<keyword id="KW-0406">Ion transport</keyword>
<keyword id="KW-0472">Membrane</keyword>
<keyword id="KW-0547">Nucleotide-binding</keyword>
<keyword id="KW-0630">Potassium</keyword>
<keyword id="KW-0633">Potassium transport</keyword>
<keyword id="KW-1185">Reference proteome</keyword>
<keyword id="KW-0812">Transmembrane</keyword>
<keyword id="KW-1133">Transmembrane helix</keyword>
<keyword id="KW-0813">Transport</keyword>
<proteinExistence type="inferred from homology"/>
<gene>
    <name evidence="1" type="primary">kdpC</name>
    <name type="ordered locus">BBta_6336</name>
</gene>
<reference key="1">
    <citation type="journal article" date="2007" name="Science">
        <title>Legumes symbioses: absence of nod genes in photosynthetic bradyrhizobia.</title>
        <authorList>
            <person name="Giraud E."/>
            <person name="Moulin L."/>
            <person name="Vallenet D."/>
            <person name="Barbe V."/>
            <person name="Cytryn E."/>
            <person name="Avarre J.-C."/>
            <person name="Jaubert M."/>
            <person name="Simon D."/>
            <person name="Cartieaux F."/>
            <person name="Prin Y."/>
            <person name="Bena G."/>
            <person name="Hannibal L."/>
            <person name="Fardoux J."/>
            <person name="Kojadinovic M."/>
            <person name="Vuillet L."/>
            <person name="Lajus A."/>
            <person name="Cruveiller S."/>
            <person name="Rouy Z."/>
            <person name="Mangenot S."/>
            <person name="Segurens B."/>
            <person name="Dossat C."/>
            <person name="Franck W.L."/>
            <person name="Chang W.-S."/>
            <person name="Saunders E."/>
            <person name="Bruce D."/>
            <person name="Richardson P."/>
            <person name="Normand P."/>
            <person name="Dreyfus B."/>
            <person name="Pignol D."/>
            <person name="Stacey G."/>
            <person name="Emerich D."/>
            <person name="Vermeglio A."/>
            <person name="Medigue C."/>
            <person name="Sadowsky M."/>
        </authorList>
    </citation>
    <scope>NUCLEOTIDE SEQUENCE [LARGE SCALE GENOMIC DNA]</scope>
    <source>
        <strain>BTAi1 / ATCC BAA-1182</strain>
    </source>
</reference>
<dbReference type="EMBL" id="CP000494">
    <property type="protein sequence ID" value="ABQ38254.1"/>
    <property type="molecule type" value="Genomic_DNA"/>
</dbReference>
<dbReference type="RefSeq" id="WP_012046198.1">
    <property type="nucleotide sequence ID" value="NC_009485.1"/>
</dbReference>
<dbReference type="SMR" id="A5EQ10"/>
<dbReference type="STRING" id="288000.BBta_6336"/>
<dbReference type="KEGG" id="bbt:BBta_6336"/>
<dbReference type="eggNOG" id="COG2156">
    <property type="taxonomic scope" value="Bacteria"/>
</dbReference>
<dbReference type="HOGENOM" id="CLU_077094_2_0_5"/>
<dbReference type="OrthoDB" id="9788285at2"/>
<dbReference type="Proteomes" id="UP000000246">
    <property type="component" value="Chromosome"/>
</dbReference>
<dbReference type="GO" id="GO:0005886">
    <property type="term" value="C:plasma membrane"/>
    <property type="evidence" value="ECO:0007669"/>
    <property type="project" value="UniProtKB-SubCell"/>
</dbReference>
<dbReference type="GO" id="GO:0005524">
    <property type="term" value="F:ATP binding"/>
    <property type="evidence" value="ECO:0007669"/>
    <property type="project" value="UniProtKB-UniRule"/>
</dbReference>
<dbReference type="GO" id="GO:0008556">
    <property type="term" value="F:P-type potassium transmembrane transporter activity"/>
    <property type="evidence" value="ECO:0007669"/>
    <property type="project" value="InterPro"/>
</dbReference>
<dbReference type="HAMAP" id="MF_00276">
    <property type="entry name" value="KdpC"/>
    <property type="match status" value="1"/>
</dbReference>
<dbReference type="InterPro" id="IPR003820">
    <property type="entry name" value="KdpC"/>
</dbReference>
<dbReference type="NCBIfam" id="TIGR00681">
    <property type="entry name" value="kdpC"/>
    <property type="match status" value="1"/>
</dbReference>
<dbReference type="NCBIfam" id="NF001454">
    <property type="entry name" value="PRK00315.1"/>
    <property type="match status" value="1"/>
</dbReference>
<dbReference type="NCBIfam" id="NF010603">
    <property type="entry name" value="PRK13999.1"/>
    <property type="match status" value="1"/>
</dbReference>
<dbReference type="PANTHER" id="PTHR30042">
    <property type="entry name" value="POTASSIUM-TRANSPORTING ATPASE C CHAIN"/>
    <property type="match status" value="1"/>
</dbReference>
<dbReference type="PANTHER" id="PTHR30042:SF2">
    <property type="entry name" value="POTASSIUM-TRANSPORTING ATPASE KDPC SUBUNIT"/>
    <property type="match status" value="1"/>
</dbReference>
<dbReference type="Pfam" id="PF02669">
    <property type="entry name" value="KdpC"/>
    <property type="match status" value="1"/>
</dbReference>
<dbReference type="PIRSF" id="PIRSF001296">
    <property type="entry name" value="K_ATPase_KdpC"/>
    <property type="match status" value="1"/>
</dbReference>
<evidence type="ECO:0000255" key="1">
    <source>
        <dbReference type="HAMAP-Rule" id="MF_00276"/>
    </source>
</evidence>
<evidence type="ECO:0000256" key="2">
    <source>
        <dbReference type="SAM" id="MobiDB-lite"/>
    </source>
</evidence>
<organism>
    <name type="scientific">Bradyrhizobium sp. (strain BTAi1 / ATCC BAA-1182)</name>
    <dbReference type="NCBI Taxonomy" id="288000"/>
    <lineage>
        <taxon>Bacteria</taxon>
        <taxon>Pseudomonadati</taxon>
        <taxon>Pseudomonadota</taxon>
        <taxon>Alphaproteobacteria</taxon>
        <taxon>Hyphomicrobiales</taxon>
        <taxon>Nitrobacteraceae</taxon>
        <taxon>Bradyrhizobium</taxon>
    </lineage>
</organism>
<feature type="chain" id="PRO_1000022264" description="Potassium-transporting ATPase KdpC subunit">
    <location>
        <begin position="1"/>
        <end position="201"/>
    </location>
</feature>
<feature type="transmembrane region" description="Helical" evidence="1">
    <location>
        <begin position="9"/>
        <end position="29"/>
    </location>
</feature>
<feature type="region of interest" description="Disordered" evidence="2">
    <location>
        <begin position="73"/>
        <end position="103"/>
    </location>
</feature>
<feature type="compositionally biased region" description="Polar residues" evidence="2">
    <location>
        <begin position="73"/>
        <end position="84"/>
    </location>
</feature>
<feature type="compositionally biased region" description="Polar residues" evidence="2">
    <location>
        <begin position="91"/>
        <end position="101"/>
    </location>
</feature>